<reference key="1">
    <citation type="journal article" date="1989" name="FEBS Lett.">
        <title>The constituents of storage granules in the dermal glands of Xenopus laevis. Structure of a basic polypeptide deduced from cloned cDNA.</title>
        <authorList>
            <person name="Berger H."/>
            <person name="Keil G."/>
        </authorList>
    </citation>
    <scope>NUCLEOTIDE SEQUENCE [MRNA]</scope>
    <source>
        <tissue>Skin</tissue>
    </source>
</reference>
<sequence length="213" mass="23361">METMYHRFLCIPFLLILGLAQGQSKGLQTVTTFRTGLKPIDVTAIRTGLQPIATFHTGQKPIDVTAIRTGLQPIATFHTGLQPVDVTAIRTGLQPIATFQTGVQRVSTFHGEPASTLQGSGSTVIKKIMVSSMNQPVSKNEGIVEVPPPSGGTHVITEEMNWHGGRNGHKMKKLGKKKHHKNRHGGKNHHKMKKIGKHHGGGRKFGKKHRHHK</sequence>
<dbReference type="EMBL" id="Y07507">
    <property type="protein sequence ID" value="CAA68806.1"/>
    <property type="molecule type" value="mRNA"/>
</dbReference>
<dbReference type="PIR" id="S04491">
    <property type="entry name" value="S04491"/>
</dbReference>
<dbReference type="RefSeq" id="NP_001095215.1">
    <property type="nucleotide sequence ID" value="NM_001101745.1"/>
</dbReference>
<dbReference type="GeneID" id="378604"/>
<dbReference type="KEGG" id="xla:378604"/>
<dbReference type="AGR" id="Xenbase:XB-GENE-6252402"/>
<dbReference type="CTD" id="378604"/>
<dbReference type="Xenbase" id="XB-GENE-6252402">
    <property type="gene designation" value="sgp.S"/>
</dbReference>
<dbReference type="Proteomes" id="UP000186698">
    <property type="component" value="Chromosome 2S"/>
</dbReference>
<dbReference type="Bgee" id="378604">
    <property type="expression patterns" value="Expressed in zone of skin and 9 other cell types or tissues"/>
</dbReference>
<dbReference type="GO" id="GO:0005576">
    <property type="term" value="C:extracellular region"/>
    <property type="evidence" value="ECO:0007669"/>
    <property type="project" value="UniProtKB-SubCell"/>
</dbReference>
<keyword id="KW-1185">Reference proteome</keyword>
<keyword id="KW-0677">Repeat</keyword>
<keyword id="KW-0964">Secreted</keyword>
<keyword id="KW-0732">Signal</keyword>
<organism>
    <name type="scientific">Xenopus laevis</name>
    <name type="common">African clawed frog</name>
    <dbReference type="NCBI Taxonomy" id="8355"/>
    <lineage>
        <taxon>Eukaryota</taxon>
        <taxon>Metazoa</taxon>
        <taxon>Chordata</taxon>
        <taxon>Craniata</taxon>
        <taxon>Vertebrata</taxon>
        <taxon>Euteleostomi</taxon>
        <taxon>Amphibia</taxon>
        <taxon>Batrachia</taxon>
        <taxon>Anura</taxon>
        <taxon>Pipoidea</taxon>
        <taxon>Pipidae</taxon>
        <taxon>Xenopodinae</taxon>
        <taxon>Xenopus</taxon>
        <taxon>Xenopus</taxon>
    </lineage>
</organism>
<name>SKGR_XENLA</name>
<feature type="signal peptide">
    <location>
        <begin position="1"/>
        <end position="26"/>
    </location>
</feature>
<feature type="chain" id="PRO_0000022349" description="Skin granule protein">
    <location>
        <begin position="27"/>
        <end position="213"/>
    </location>
</feature>
<feature type="repeat" description="1">
    <location>
        <begin position="27"/>
        <end position="48"/>
    </location>
</feature>
<feature type="repeat" description="2">
    <location>
        <begin position="49"/>
        <end position="70"/>
    </location>
</feature>
<feature type="repeat" description="3">
    <location>
        <begin position="71"/>
        <end position="92"/>
    </location>
</feature>
<feature type="repeat" description="4; truncated">
    <location>
        <begin position="93"/>
        <end position="104"/>
    </location>
</feature>
<feature type="region of interest" description="4 X 22 AA approximate tandem repeats">
    <location>
        <begin position="27"/>
        <end position="104"/>
    </location>
</feature>
<feature type="region of interest" description="Disordered" evidence="1">
    <location>
        <begin position="162"/>
        <end position="213"/>
    </location>
</feature>
<feature type="compositionally biased region" description="Basic residues" evidence="1">
    <location>
        <begin position="166"/>
        <end position="213"/>
    </location>
</feature>
<evidence type="ECO:0000256" key="1">
    <source>
        <dbReference type="SAM" id="MobiDB-lite"/>
    </source>
</evidence>
<protein>
    <recommendedName>
        <fullName>Skin granule protein</fullName>
    </recommendedName>
</protein>
<gene>
    <name type="primary">sgp</name>
</gene>
<proteinExistence type="evidence at transcript level"/>
<accession>P13673</accession>
<comment type="subcellular location">
    <subcellularLocation>
        <location>Secreted</location>
    </subcellularLocation>
</comment>